<evidence type="ECO:0000250" key="1"/>
<evidence type="ECO:0000255" key="2"/>
<evidence type="ECO:0000305" key="3"/>
<feature type="signal peptide" evidence="1">
    <location>
        <begin position="1"/>
        <end position="17"/>
    </location>
</feature>
<feature type="chain" id="PRO_0000005861" description="Granulocyte-macrophage colony-stimulating factor">
    <location>
        <begin position="18"/>
        <end position="144"/>
    </location>
</feature>
<feature type="glycosylation site" description="O-linked (GalNAc...) serine" evidence="1">
    <location>
        <position position="22"/>
    </location>
</feature>
<feature type="glycosylation site" description="O-linked (GalNAc...) threonine" evidence="1">
    <location>
        <position position="27"/>
    </location>
</feature>
<feature type="glycosylation site" description="N-linked (GlcNAc...) asparagine" evidence="2">
    <location>
        <position position="44"/>
    </location>
</feature>
<feature type="disulfide bond" evidence="1">
    <location>
        <begin position="71"/>
        <end position="113"/>
    </location>
</feature>
<feature type="disulfide bond" evidence="1">
    <location>
        <begin position="105"/>
        <end position="138"/>
    </location>
</feature>
<comment type="function">
    <text evidence="1">Cytokine that stimulates the growth and differentiation of hematopoietic precursor cells from various lineages, including granulocytes, macrophages, eosinophils and erythrocytes.</text>
</comment>
<comment type="subunit">
    <text evidence="1">Monomer. The signaling GM-CSF receptor complex is a dodecamer of two head-to-head hexamers of two alpha, two beta, and two ligand subunits (By similarity).</text>
</comment>
<comment type="subcellular location">
    <subcellularLocation>
        <location>Secreted</location>
    </subcellularLocation>
</comment>
<comment type="similarity">
    <text evidence="3">Belongs to the GM-CSF family.</text>
</comment>
<sequence length="144" mass="16137">MWLQNLLFLGTVVCSISAPTRSPTLVTRPSQHVDAIQEALSLLNNSNDVTAVMNKAVKVVSEVFDPEGPTCLETRLQLYKEGLQGSLTSLKNPLTMMANHYKQHCPPTPESPCATQNINFKSFKENLKDFLFNIPFDCWKPVKK</sequence>
<organism>
    <name type="scientific">Canis lupus familiaris</name>
    <name type="common">Dog</name>
    <name type="synonym">Canis familiaris</name>
    <dbReference type="NCBI Taxonomy" id="9615"/>
    <lineage>
        <taxon>Eukaryota</taxon>
        <taxon>Metazoa</taxon>
        <taxon>Chordata</taxon>
        <taxon>Craniata</taxon>
        <taxon>Vertebrata</taxon>
        <taxon>Euteleostomi</taxon>
        <taxon>Mammalia</taxon>
        <taxon>Eutheria</taxon>
        <taxon>Laurasiatheria</taxon>
        <taxon>Carnivora</taxon>
        <taxon>Caniformia</taxon>
        <taxon>Canidae</taxon>
        <taxon>Canis</taxon>
    </lineage>
</organism>
<accession>P48749</accession>
<dbReference type="EMBL" id="S49738">
    <property type="protein sequence ID" value="AAB19466.1"/>
    <property type="molecule type" value="mRNA"/>
</dbReference>
<dbReference type="PIR" id="A44936">
    <property type="entry name" value="A44936"/>
</dbReference>
<dbReference type="RefSeq" id="NP_001003245.1">
    <property type="nucleotide sequence ID" value="NM_001003245.1"/>
</dbReference>
<dbReference type="RefSeq" id="XP_005626428.1">
    <property type="nucleotide sequence ID" value="XM_005626371.1"/>
</dbReference>
<dbReference type="RefSeq" id="XP_005626429.1">
    <property type="nucleotide sequence ID" value="XM_005626372.1"/>
</dbReference>
<dbReference type="SMR" id="P48749"/>
<dbReference type="FunCoup" id="P48749">
    <property type="interactions" value="124"/>
</dbReference>
<dbReference type="STRING" id="9615.ENSCAFP00000032076"/>
<dbReference type="GlyCosmos" id="P48749">
    <property type="glycosylation" value="3 sites, No reported glycans"/>
</dbReference>
<dbReference type="PaxDb" id="9612-ENSCAFP00000001176"/>
<dbReference type="Ensembl" id="ENSCAFT00000036668.5">
    <property type="protein sequence ID" value="ENSCAFP00000032076.2"/>
    <property type="gene ID" value="ENSCAFG00000000820.6"/>
</dbReference>
<dbReference type="Ensembl" id="ENSCAFT00030023256.1">
    <property type="protein sequence ID" value="ENSCAFP00030020283.1"/>
    <property type="gene ID" value="ENSCAFG00030012563.1"/>
</dbReference>
<dbReference type="Ensembl" id="ENSCAFT00040010702.1">
    <property type="protein sequence ID" value="ENSCAFP00040009281.1"/>
    <property type="gene ID" value="ENSCAFG00040005704.1"/>
</dbReference>
<dbReference type="GeneID" id="403923"/>
<dbReference type="KEGG" id="cfa:403923"/>
<dbReference type="CTD" id="1437"/>
<dbReference type="VGNC" id="VGNC:39654">
    <property type="gene designation" value="CSF2"/>
</dbReference>
<dbReference type="eggNOG" id="ENOG502TDUI">
    <property type="taxonomic scope" value="Eukaryota"/>
</dbReference>
<dbReference type="HOGENOM" id="CLU_152286_0_0_1"/>
<dbReference type="InParanoid" id="P48749"/>
<dbReference type="OrthoDB" id="9633166at2759"/>
<dbReference type="Reactome" id="R-CFA-512988">
    <property type="pathway name" value="Interleukin-3, Interleukin-5 and GM-CSF signaling"/>
</dbReference>
<dbReference type="Reactome" id="R-CFA-5673001">
    <property type="pathway name" value="RAF/MAP kinase cascade"/>
</dbReference>
<dbReference type="Reactome" id="R-CFA-912526">
    <property type="pathway name" value="Interleukin receptor SHC signaling"/>
</dbReference>
<dbReference type="Proteomes" id="UP000002254">
    <property type="component" value="Chromosome 11"/>
</dbReference>
<dbReference type="Proteomes" id="UP000694429">
    <property type="component" value="Chromosome 11"/>
</dbReference>
<dbReference type="Proteomes" id="UP000694542">
    <property type="component" value="Chromosome 11"/>
</dbReference>
<dbReference type="Proteomes" id="UP000805418">
    <property type="component" value="Unplaced"/>
</dbReference>
<dbReference type="Bgee" id="ENSCAFG00000000820">
    <property type="expression patterns" value="Expressed in testis and 11 other cell types or tissues"/>
</dbReference>
<dbReference type="GO" id="GO:0005615">
    <property type="term" value="C:extracellular space"/>
    <property type="evidence" value="ECO:0000250"/>
    <property type="project" value="UniProtKB"/>
</dbReference>
<dbReference type="GO" id="GO:0005125">
    <property type="term" value="F:cytokine activity"/>
    <property type="evidence" value="ECO:0000250"/>
    <property type="project" value="UniProtKB"/>
</dbReference>
<dbReference type="GO" id="GO:0005129">
    <property type="term" value="F:granulocyte macrophage colony-stimulating factor receptor binding"/>
    <property type="evidence" value="ECO:0007669"/>
    <property type="project" value="InterPro"/>
</dbReference>
<dbReference type="GO" id="GO:0008083">
    <property type="term" value="F:growth factor activity"/>
    <property type="evidence" value="ECO:0007669"/>
    <property type="project" value="UniProtKB-KW"/>
</dbReference>
<dbReference type="GO" id="GO:0006955">
    <property type="term" value="P:immune response"/>
    <property type="evidence" value="ECO:0007669"/>
    <property type="project" value="InterPro"/>
</dbReference>
<dbReference type="GO" id="GO:0030099">
    <property type="term" value="P:myeloid cell differentiation"/>
    <property type="evidence" value="ECO:0000318"/>
    <property type="project" value="GO_Central"/>
</dbReference>
<dbReference type="CDD" id="cd00040">
    <property type="entry name" value="CSF2"/>
    <property type="match status" value="1"/>
</dbReference>
<dbReference type="FunFam" id="1.20.1250.10:FF:000028">
    <property type="entry name" value="Granulocyte-macrophage colony-stimulating factor"/>
    <property type="match status" value="1"/>
</dbReference>
<dbReference type="Gene3D" id="1.20.1250.10">
    <property type="match status" value="1"/>
</dbReference>
<dbReference type="InterPro" id="IPR009079">
    <property type="entry name" value="4_helix_cytokine-like_core"/>
</dbReference>
<dbReference type="InterPro" id="IPR000773">
    <property type="entry name" value="GM_colony-stim-fac"/>
</dbReference>
<dbReference type="PANTHER" id="PTHR10059:SF0">
    <property type="entry name" value="GRANULOCYTE-MACROPHAGE COLONY-STIMULATING FACTOR"/>
    <property type="match status" value="1"/>
</dbReference>
<dbReference type="PANTHER" id="PTHR10059">
    <property type="entry name" value="GRANULOCYTE-MACROPHAGE COLONY-STIMULATING FACTOR GM-CSF"/>
    <property type="match status" value="1"/>
</dbReference>
<dbReference type="Pfam" id="PF01109">
    <property type="entry name" value="GM_CSF"/>
    <property type="match status" value="1"/>
</dbReference>
<dbReference type="PRINTS" id="PR00693">
    <property type="entry name" value="GMCSFACTOR"/>
</dbReference>
<dbReference type="SMART" id="SM00040">
    <property type="entry name" value="CSF2"/>
    <property type="match status" value="1"/>
</dbReference>
<dbReference type="SUPFAM" id="SSF47266">
    <property type="entry name" value="4-helical cytokines"/>
    <property type="match status" value="1"/>
</dbReference>
<dbReference type="PROSITE" id="PS00702">
    <property type="entry name" value="GM_CSF"/>
    <property type="match status" value="1"/>
</dbReference>
<reference key="1">
    <citation type="journal article" date="1991" name="Blood">
        <title>Molecular cloning and in vivo evaluation of canine granulocyte-macrophage colony-stimulating factor.</title>
        <authorList>
            <person name="Nash R.A."/>
            <person name="Schuening F."/>
            <person name="Appelbaum F.R."/>
            <person name="Hammond W.P."/>
            <person name="Boone T."/>
            <person name="Morris C.F."/>
            <person name="Slichter S.J."/>
            <person name="Storb R."/>
        </authorList>
    </citation>
    <scope>NUCLEOTIDE SEQUENCE [MRNA]</scope>
</reference>
<protein>
    <recommendedName>
        <fullName>Granulocyte-macrophage colony-stimulating factor</fullName>
        <shortName>GM-CSF</shortName>
    </recommendedName>
    <alternativeName>
        <fullName>Colony-stimulating factor</fullName>
        <shortName>CSF</shortName>
    </alternativeName>
</protein>
<proteinExistence type="evidence at transcript level"/>
<keyword id="KW-0202">Cytokine</keyword>
<keyword id="KW-1015">Disulfide bond</keyword>
<keyword id="KW-0325">Glycoprotein</keyword>
<keyword id="KW-0339">Growth factor</keyword>
<keyword id="KW-1185">Reference proteome</keyword>
<keyword id="KW-0964">Secreted</keyword>
<keyword id="KW-0732">Signal</keyword>
<name>CSF2_CANLF</name>
<gene>
    <name type="primary">CSF2</name>
</gene>